<protein>
    <recommendedName>
        <fullName>Uridine-cytidine kinase B</fullName>
        <ecNumber>2.7.1.48</ecNumber>
    </recommendedName>
    <alternativeName>
        <fullName>Cytidine monophosphokinase B</fullName>
    </alternativeName>
    <alternativeName>
        <fullName>Uridine monophosphokinase B</fullName>
    </alternativeName>
</protein>
<organism>
    <name type="scientific">Dictyostelium discoideum</name>
    <name type="common">Social amoeba</name>
    <dbReference type="NCBI Taxonomy" id="44689"/>
    <lineage>
        <taxon>Eukaryota</taxon>
        <taxon>Amoebozoa</taxon>
        <taxon>Evosea</taxon>
        <taxon>Eumycetozoa</taxon>
        <taxon>Dictyostelia</taxon>
        <taxon>Dictyosteliales</taxon>
        <taxon>Dictyosteliaceae</taxon>
        <taxon>Dictyostelium</taxon>
    </lineage>
</organism>
<comment type="function">
    <text evidence="1">Catalyzes the conversion of uridine into uridine monophosphate and cytidine into cytidine monophosphate in the pyrimidine salvage pathway.</text>
</comment>
<comment type="catalytic activity">
    <reaction>
        <text>uridine + ATP = UMP + ADP + H(+)</text>
        <dbReference type="Rhea" id="RHEA:16825"/>
        <dbReference type="ChEBI" id="CHEBI:15378"/>
        <dbReference type="ChEBI" id="CHEBI:16704"/>
        <dbReference type="ChEBI" id="CHEBI:30616"/>
        <dbReference type="ChEBI" id="CHEBI:57865"/>
        <dbReference type="ChEBI" id="CHEBI:456216"/>
        <dbReference type="EC" id="2.7.1.48"/>
    </reaction>
</comment>
<comment type="catalytic activity">
    <reaction>
        <text>cytidine + ATP = CMP + ADP + H(+)</text>
        <dbReference type="Rhea" id="RHEA:24674"/>
        <dbReference type="ChEBI" id="CHEBI:15378"/>
        <dbReference type="ChEBI" id="CHEBI:17562"/>
        <dbReference type="ChEBI" id="CHEBI:30616"/>
        <dbReference type="ChEBI" id="CHEBI:60377"/>
        <dbReference type="ChEBI" id="CHEBI:456216"/>
        <dbReference type="EC" id="2.7.1.48"/>
    </reaction>
</comment>
<comment type="pathway">
    <text>Pyrimidine metabolism; CTP biosynthesis via salvage pathway; CTP from cytidine: step 1/3.</text>
</comment>
<comment type="pathway">
    <text>Pyrimidine metabolism; UMP biosynthesis via salvage pathway; UMP from uridine: step 1/1.</text>
</comment>
<comment type="similarity">
    <text evidence="3">Belongs to the uridine kinase family.</text>
</comment>
<sequence length="243" mass="27516">MKYMENNNTSHSKHPFIIGVTGGTASGKTTVCDEIMKRLENKRIAIICLDSFYRPLSKEDRETVASYNFDHPDAFDWSLVENALRDLKDGKDIEIPTYCFKSHSRLEETVGLGDVDVILFEGILSFYTQSLREQMDIKIFVDTDSDTRLSRRVMRDIAERGRSLEGVLYQYEKFVKPAFDDYILPTKKHADVIIPRGADNVVAIDLIVQHISSKLSEKESFRKSQGQLNVNGGSNTASSVNHA</sequence>
<proteinExistence type="inferred from homology"/>
<dbReference type="EC" id="2.7.1.48"/>
<dbReference type="EMBL" id="AAFI02000012">
    <property type="protein sequence ID" value="EAL70172.1"/>
    <property type="molecule type" value="Genomic_DNA"/>
</dbReference>
<dbReference type="RefSeq" id="XP_644025.1">
    <property type="nucleotide sequence ID" value="XM_638933.1"/>
</dbReference>
<dbReference type="SMR" id="Q8T154"/>
<dbReference type="FunCoup" id="Q8T154">
    <property type="interactions" value="80"/>
</dbReference>
<dbReference type="STRING" id="44689.Q8T154"/>
<dbReference type="PaxDb" id="44689-DDB0230208"/>
<dbReference type="EnsemblProtists" id="EAL70172">
    <property type="protein sequence ID" value="EAL70172"/>
    <property type="gene ID" value="DDB_G0274559"/>
</dbReference>
<dbReference type="GeneID" id="8619455"/>
<dbReference type="KEGG" id="ddi:DDB_G0274559"/>
<dbReference type="dictyBase" id="DDB_G0274559">
    <property type="gene designation" value="udkB"/>
</dbReference>
<dbReference type="VEuPathDB" id="AmoebaDB:DDB_G0274559"/>
<dbReference type="eggNOG" id="KOG4203">
    <property type="taxonomic scope" value="Eukaryota"/>
</dbReference>
<dbReference type="HOGENOM" id="CLU_021278_1_1_1"/>
<dbReference type="InParanoid" id="Q8T154"/>
<dbReference type="OMA" id="TVKPMHE"/>
<dbReference type="PhylomeDB" id="Q8T154"/>
<dbReference type="Reactome" id="R-DDI-196807">
    <property type="pathway name" value="Nicotinate metabolism"/>
</dbReference>
<dbReference type="Reactome" id="R-DDI-73614">
    <property type="pathway name" value="Pyrimidine salvage"/>
</dbReference>
<dbReference type="UniPathway" id="UPA00574">
    <property type="reaction ID" value="UER00637"/>
</dbReference>
<dbReference type="UniPathway" id="UPA00579">
    <property type="reaction ID" value="UER00640"/>
</dbReference>
<dbReference type="PRO" id="PR:Q8T154"/>
<dbReference type="Proteomes" id="UP000002195">
    <property type="component" value="Chromosome 2"/>
</dbReference>
<dbReference type="GO" id="GO:0005737">
    <property type="term" value="C:cytoplasm"/>
    <property type="evidence" value="ECO:0000318"/>
    <property type="project" value="GO_Central"/>
</dbReference>
<dbReference type="GO" id="GO:0005524">
    <property type="term" value="F:ATP binding"/>
    <property type="evidence" value="ECO:0007669"/>
    <property type="project" value="UniProtKB-KW"/>
</dbReference>
<dbReference type="GO" id="GO:0043771">
    <property type="term" value="F:cytidine kinase activity"/>
    <property type="evidence" value="ECO:0007669"/>
    <property type="project" value="RHEA"/>
</dbReference>
<dbReference type="GO" id="GO:0004849">
    <property type="term" value="F:uridine kinase activity"/>
    <property type="evidence" value="ECO:0000250"/>
    <property type="project" value="dictyBase"/>
</dbReference>
<dbReference type="GO" id="GO:0044211">
    <property type="term" value="P:CTP salvage"/>
    <property type="evidence" value="ECO:0007669"/>
    <property type="project" value="UniProtKB-UniPathway"/>
</dbReference>
<dbReference type="GO" id="GO:0008655">
    <property type="term" value="P:pyrimidine-containing compound salvage"/>
    <property type="evidence" value="ECO:0000250"/>
    <property type="project" value="dictyBase"/>
</dbReference>
<dbReference type="GO" id="GO:0044206">
    <property type="term" value="P:UMP salvage"/>
    <property type="evidence" value="ECO:0007669"/>
    <property type="project" value="UniProtKB-UniPathway"/>
</dbReference>
<dbReference type="CDD" id="cd02023">
    <property type="entry name" value="UMPK"/>
    <property type="match status" value="1"/>
</dbReference>
<dbReference type="FunFam" id="3.40.50.300:FF:001802">
    <property type="entry name" value="Uridine-cytidine kinase 1"/>
    <property type="match status" value="1"/>
</dbReference>
<dbReference type="Gene3D" id="3.40.50.300">
    <property type="entry name" value="P-loop containing nucleotide triphosphate hydrolases"/>
    <property type="match status" value="1"/>
</dbReference>
<dbReference type="InterPro" id="IPR027417">
    <property type="entry name" value="P-loop_NTPase"/>
</dbReference>
<dbReference type="InterPro" id="IPR006083">
    <property type="entry name" value="PRK/URK"/>
</dbReference>
<dbReference type="InterPro" id="IPR000764">
    <property type="entry name" value="Uridine_kinase-like"/>
</dbReference>
<dbReference type="NCBIfam" id="NF004018">
    <property type="entry name" value="PRK05480.1"/>
    <property type="match status" value="1"/>
</dbReference>
<dbReference type="NCBIfam" id="TIGR00235">
    <property type="entry name" value="udk"/>
    <property type="match status" value="1"/>
</dbReference>
<dbReference type="PANTHER" id="PTHR10285">
    <property type="entry name" value="URIDINE KINASE"/>
    <property type="match status" value="1"/>
</dbReference>
<dbReference type="Pfam" id="PF00485">
    <property type="entry name" value="PRK"/>
    <property type="match status" value="1"/>
</dbReference>
<dbReference type="PRINTS" id="PR00988">
    <property type="entry name" value="URIDINKINASE"/>
</dbReference>
<dbReference type="SUPFAM" id="SSF52540">
    <property type="entry name" value="P-loop containing nucleoside triphosphate hydrolases"/>
    <property type="match status" value="1"/>
</dbReference>
<evidence type="ECO:0000250" key="1"/>
<evidence type="ECO:0000255" key="2"/>
<evidence type="ECO:0000305" key="3"/>
<keyword id="KW-0067">ATP-binding</keyword>
<keyword id="KW-0418">Kinase</keyword>
<keyword id="KW-0547">Nucleotide-binding</keyword>
<keyword id="KW-1185">Reference proteome</keyword>
<keyword id="KW-0808">Transferase</keyword>
<name>UCKB_DICDI</name>
<reference key="1">
    <citation type="journal article" date="2002" name="Nature">
        <title>Sequence and analysis of chromosome 2 of Dictyostelium discoideum.</title>
        <authorList>
            <person name="Gloeckner G."/>
            <person name="Eichinger L."/>
            <person name="Szafranski K."/>
            <person name="Pachebat J.A."/>
            <person name="Bankier A.T."/>
            <person name="Dear P.H."/>
            <person name="Lehmann R."/>
            <person name="Baumgart C."/>
            <person name="Parra G."/>
            <person name="Abril J.F."/>
            <person name="Guigo R."/>
            <person name="Kumpf K."/>
            <person name="Tunggal B."/>
            <person name="Cox E.C."/>
            <person name="Quail M.A."/>
            <person name="Platzer M."/>
            <person name="Rosenthal A."/>
            <person name="Noegel A.A."/>
        </authorList>
    </citation>
    <scope>NUCLEOTIDE SEQUENCE [LARGE SCALE GENOMIC DNA]</scope>
    <source>
        <strain>AX4</strain>
    </source>
</reference>
<reference key="2">
    <citation type="journal article" date="2005" name="Nature">
        <title>The genome of the social amoeba Dictyostelium discoideum.</title>
        <authorList>
            <person name="Eichinger L."/>
            <person name="Pachebat J.A."/>
            <person name="Gloeckner G."/>
            <person name="Rajandream M.A."/>
            <person name="Sucgang R."/>
            <person name="Berriman M."/>
            <person name="Song J."/>
            <person name="Olsen R."/>
            <person name="Szafranski K."/>
            <person name="Xu Q."/>
            <person name="Tunggal B."/>
            <person name="Kummerfeld S."/>
            <person name="Madera M."/>
            <person name="Konfortov B.A."/>
            <person name="Rivero F."/>
            <person name="Bankier A.T."/>
            <person name="Lehmann R."/>
            <person name="Hamlin N."/>
            <person name="Davies R."/>
            <person name="Gaudet P."/>
            <person name="Fey P."/>
            <person name="Pilcher K."/>
            <person name="Chen G."/>
            <person name="Saunders D."/>
            <person name="Sodergren E.J."/>
            <person name="Davis P."/>
            <person name="Kerhornou A."/>
            <person name="Nie X."/>
            <person name="Hall N."/>
            <person name="Anjard C."/>
            <person name="Hemphill L."/>
            <person name="Bason N."/>
            <person name="Farbrother P."/>
            <person name="Desany B."/>
            <person name="Just E."/>
            <person name="Morio T."/>
            <person name="Rost R."/>
            <person name="Churcher C.M."/>
            <person name="Cooper J."/>
            <person name="Haydock S."/>
            <person name="van Driessche N."/>
            <person name="Cronin A."/>
            <person name="Goodhead I."/>
            <person name="Muzny D.M."/>
            <person name="Mourier T."/>
            <person name="Pain A."/>
            <person name="Lu M."/>
            <person name="Harper D."/>
            <person name="Lindsay R."/>
            <person name="Hauser H."/>
            <person name="James K.D."/>
            <person name="Quiles M."/>
            <person name="Madan Babu M."/>
            <person name="Saito T."/>
            <person name="Buchrieser C."/>
            <person name="Wardroper A."/>
            <person name="Felder M."/>
            <person name="Thangavelu M."/>
            <person name="Johnson D."/>
            <person name="Knights A."/>
            <person name="Loulseged H."/>
            <person name="Mungall K.L."/>
            <person name="Oliver K."/>
            <person name="Price C."/>
            <person name="Quail M.A."/>
            <person name="Urushihara H."/>
            <person name="Hernandez J."/>
            <person name="Rabbinowitsch E."/>
            <person name="Steffen D."/>
            <person name="Sanders M."/>
            <person name="Ma J."/>
            <person name="Kohara Y."/>
            <person name="Sharp S."/>
            <person name="Simmonds M.N."/>
            <person name="Spiegler S."/>
            <person name="Tivey A."/>
            <person name="Sugano S."/>
            <person name="White B."/>
            <person name="Walker D."/>
            <person name="Woodward J.R."/>
            <person name="Winckler T."/>
            <person name="Tanaka Y."/>
            <person name="Shaulsky G."/>
            <person name="Schleicher M."/>
            <person name="Weinstock G.M."/>
            <person name="Rosenthal A."/>
            <person name="Cox E.C."/>
            <person name="Chisholm R.L."/>
            <person name="Gibbs R.A."/>
            <person name="Loomis W.F."/>
            <person name="Platzer M."/>
            <person name="Kay R.R."/>
            <person name="Williams J.G."/>
            <person name="Dear P.H."/>
            <person name="Noegel A.A."/>
            <person name="Barrell B.G."/>
            <person name="Kuspa A."/>
        </authorList>
    </citation>
    <scope>NUCLEOTIDE SEQUENCE [LARGE SCALE GENOMIC DNA]</scope>
    <source>
        <strain>AX4</strain>
    </source>
</reference>
<feature type="chain" id="PRO_0000327605" description="Uridine-cytidine kinase B">
    <location>
        <begin position="1"/>
        <end position="243"/>
    </location>
</feature>
<feature type="binding site" evidence="2">
    <location>
        <begin position="22"/>
        <end position="29"/>
    </location>
    <ligand>
        <name>ATP</name>
        <dbReference type="ChEBI" id="CHEBI:30616"/>
    </ligand>
</feature>
<accession>Q8T154</accession>
<accession>Q555P0</accession>
<gene>
    <name type="primary">udkB</name>
    <name type="ORF">DDB_G0274559</name>
</gene>